<organism>
    <name type="scientific">Rattus norvegicus</name>
    <name type="common">Rat</name>
    <dbReference type="NCBI Taxonomy" id="10116"/>
    <lineage>
        <taxon>Eukaryota</taxon>
        <taxon>Metazoa</taxon>
        <taxon>Chordata</taxon>
        <taxon>Craniata</taxon>
        <taxon>Vertebrata</taxon>
        <taxon>Euteleostomi</taxon>
        <taxon>Mammalia</taxon>
        <taxon>Eutheria</taxon>
        <taxon>Euarchontoglires</taxon>
        <taxon>Glires</taxon>
        <taxon>Rodentia</taxon>
        <taxon>Myomorpha</taxon>
        <taxon>Muroidea</taxon>
        <taxon>Muridae</taxon>
        <taxon>Murinae</taxon>
        <taxon>Rattus</taxon>
    </lineage>
</organism>
<name>NKAP_RAT</name>
<gene>
    <name type="primary">Nkap</name>
</gene>
<sequence length="415" mass="47267">MAPVSGSRSPVREASGGKRRSSSRSPKSIKSSRSPRCRRSRSRSCSRFGDRNGLSHSLSGFSQSSRNQSYRSRSRSRSRERPSAQRSAPFASSSSSAYYGGYSRPYGGDKPWPSLLDKEREESLRQKRLSERERIGELGAPEVWGLSPKNPEPDSDEHTPVEDEEPKKSTTSASSSEDDKKKKRKSSRSKERAKKKRKKKSSKRKHKKYSEDSDSDSESDTDSSDEDSKRRAKKAKKKEKKKKRRGKKYKKKKSKKNRKESSDSSSKESQEEFLENPWKDRSKTEEPSDLIGPEAPKTLASQDDKPLNYGHALLPGEGAAMAEYVKAGKRIPRRGEIGLTSEEIASFECSGYVMSGSRHRRMEAVRLRKENQIYSADEKRALASFNQEERRKRENKILASFREMVYRKTKGKDDK</sequence>
<accession>Q4V7C9</accession>
<dbReference type="EMBL" id="BC098011">
    <property type="protein sequence ID" value="AAH98011.1"/>
    <property type="molecule type" value="mRNA"/>
</dbReference>
<dbReference type="RefSeq" id="NP_001020043.1">
    <property type="nucleotide sequence ID" value="NM_001024872.1"/>
</dbReference>
<dbReference type="SMR" id="Q4V7C9"/>
<dbReference type="FunCoup" id="Q4V7C9">
    <property type="interactions" value="2427"/>
</dbReference>
<dbReference type="STRING" id="10116.ENSRNOP00000073123"/>
<dbReference type="iPTMnet" id="Q4V7C9"/>
<dbReference type="PhosphoSitePlus" id="Q4V7C9"/>
<dbReference type="PaxDb" id="10116-ENSRNOP00000039435"/>
<dbReference type="GeneID" id="298342"/>
<dbReference type="KEGG" id="rno:298342"/>
<dbReference type="UCSC" id="RGD:1565955">
    <property type="organism name" value="rat"/>
</dbReference>
<dbReference type="AGR" id="RGD:1565955"/>
<dbReference type="CTD" id="79576"/>
<dbReference type="RGD" id="1565955">
    <property type="gene designation" value="Nkap"/>
</dbReference>
<dbReference type="eggNOG" id="KOG2812">
    <property type="taxonomic scope" value="Eukaryota"/>
</dbReference>
<dbReference type="InParanoid" id="Q4V7C9"/>
<dbReference type="OrthoDB" id="91432at9989"/>
<dbReference type="PhylomeDB" id="Q4V7C9"/>
<dbReference type="TreeFam" id="TF315333"/>
<dbReference type="Reactome" id="R-RNO-72163">
    <property type="pathway name" value="mRNA Splicing - Major Pathway"/>
</dbReference>
<dbReference type="PRO" id="PR:Q4V7C9"/>
<dbReference type="Proteomes" id="UP000002494">
    <property type="component" value="Unplaced"/>
</dbReference>
<dbReference type="GO" id="GO:0005634">
    <property type="term" value="C:nucleus"/>
    <property type="evidence" value="ECO:0000318"/>
    <property type="project" value="GO_Central"/>
</dbReference>
<dbReference type="GO" id="GO:0003682">
    <property type="term" value="F:chromatin binding"/>
    <property type="evidence" value="ECO:0000250"/>
    <property type="project" value="UniProtKB"/>
</dbReference>
<dbReference type="GO" id="GO:0031490">
    <property type="term" value="F:chromatin DNA binding"/>
    <property type="evidence" value="ECO:0000266"/>
    <property type="project" value="RGD"/>
</dbReference>
<dbReference type="GO" id="GO:0030851">
    <property type="term" value="P:granulocyte differentiation"/>
    <property type="evidence" value="ECO:0000266"/>
    <property type="project" value="RGD"/>
</dbReference>
<dbReference type="GO" id="GO:0071425">
    <property type="term" value="P:hematopoietic stem cell proliferation"/>
    <property type="evidence" value="ECO:0000266"/>
    <property type="project" value="RGD"/>
</dbReference>
<dbReference type="GO" id="GO:0030097">
    <property type="term" value="P:hemopoiesis"/>
    <property type="evidence" value="ECO:0000266"/>
    <property type="project" value="RGD"/>
</dbReference>
<dbReference type="GO" id="GO:0045892">
    <property type="term" value="P:negative regulation of DNA-templated transcription"/>
    <property type="evidence" value="ECO:0000250"/>
    <property type="project" value="UniProtKB"/>
</dbReference>
<dbReference type="GO" id="GO:0000122">
    <property type="term" value="P:negative regulation of transcription by RNA polymerase II"/>
    <property type="evidence" value="ECO:0000250"/>
    <property type="project" value="UniProtKB"/>
</dbReference>
<dbReference type="GO" id="GO:0007219">
    <property type="term" value="P:Notch signaling pathway"/>
    <property type="evidence" value="ECO:0007669"/>
    <property type="project" value="UniProtKB-KW"/>
</dbReference>
<dbReference type="GO" id="GO:0046638">
    <property type="term" value="P:positive regulation of alpha-beta T cell differentiation"/>
    <property type="evidence" value="ECO:0000250"/>
    <property type="project" value="UniProtKB"/>
</dbReference>
<dbReference type="GO" id="GO:0035019">
    <property type="term" value="P:somatic stem cell population maintenance"/>
    <property type="evidence" value="ECO:0000266"/>
    <property type="project" value="RGD"/>
</dbReference>
<dbReference type="GO" id="GO:0033077">
    <property type="term" value="P:T cell differentiation in thymus"/>
    <property type="evidence" value="ECO:0000266"/>
    <property type="project" value="RGD"/>
</dbReference>
<dbReference type="InterPro" id="IPR040466">
    <property type="entry name" value="NKAP"/>
</dbReference>
<dbReference type="InterPro" id="IPR009269">
    <property type="entry name" value="NKAP_C"/>
</dbReference>
<dbReference type="PANTHER" id="PTHR13087">
    <property type="entry name" value="NF-KAPPA B ACTIVATING PROTEIN"/>
    <property type="match status" value="1"/>
</dbReference>
<dbReference type="PANTHER" id="PTHR13087:SF2">
    <property type="entry name" value="NF-KAPPA-B-ACTIVATING PROTEIN"/>
    <property type="match status" value="1"/>
</dbReference>
<dbReference type="Pfam" id="PF15692">
    <property type="entry name" value="NKAP"/>
    <property type="match status" value="1"/>
</dbReference>
<dbReference type="Pfam" id="PF06047">
    <property type="entry name" value="Nkap_C"/>
    <property type="match status" value="1"/>
</dbReference>
<comment type="function">
    <text evidence="2">Acts as a transcriptional repressor. Plays a role as a transcriptional corepressor of the Notch-mediated signaling required for T-cell development. Also involved in the TNF and IL-1 induced NF-kappa-B activation. Associates with chromatin at the Notch-regulated SKP2 promoter (By similarity).</text>
</comment>
<comment type="subunit">
    <text evidence="1">Component of the Notch corepressor complex. Interacts with CIR1 and HDAC3 (By similarity).</text>
</comment>
<comment type="subcellular location">
    <subcellularLocation>
        <location evidence="1">Nucleus</location>
    </subcellularLocation>
</comment>
<comment type="similarity">
    <text evidence="4">Belongs to the NKAP family.</text>
</comment>
<proteinExistence type="evidence at protein level"/>
<protein>
    <recommendedName>
        <fullName>NF-kappa-B-activating protein</fullName>
    </recommendedName>
</protein>
<feature type="chain" id="PRO_0000259647" description="NF-kappa-B-activating protein">
    <location>
        <begin position="1"/>
        <end position="415"/>
    </location>
</feature>
<feature type="region of interest" description="Disordered" evidence="3">
    <location>
        <begin position="1"/>
        <end position="309"/>
    </location>
</feature>
<feature type="region of interest" description="Necessary for interaction with CIR1" evidence="1">
    <location>
        <begin position="177"/>
        <end position="272"/>
    </location>
</feature>
<feature type="region of interest" description="Necessary for interaction with HDAC3 and transcriptional repression" evidence="1">
    <location>
        <begin position="273"/>
        <end position="415"/>
    </location>
</feature>
<feature type="compositionally biased region" description="Low complexity" evidence="3">
    <location>
        <begin position="23"/>
        <end position="32"/>
    </location>
</feature>
<feature type="compositionally biased region" description="Basic residues" evidence="3">
    <location>
        <begin position="33"/>
        <end position="44"/>
    </location>
</feature>
<feature type="compositionally biased region" description="Low complexity" evidence="3">
    <location>
        <begin position="54"/>
        <end position="71"/>
    </location>
</feature>
<feature type="compositionally biased region" description="Low complexity" evidence="3">
    <location>
        <begin position="84"/>
        <end position="108"/>
    </location>
</feature>
<feature type="compositionally biased region" description="Basic and acidic residues" evidence="3">
    <location>
        <begin position="116"/>
        <end position="136"/>
    </location>
</feature>
<feature type="compositionally biased region" description="Basic and acidic residues" evidence="3">
    <location>
        <begin position="156"/>
        <end position="168"/>
    </location>
</feature>
<feature type="compositionally biased region" description="Basic residues" evidence="3">
    <location>
        <begin position="181"/>
        <end position="208"/>
    </location>
</feature>
<feature type="compositionally biased region" description="Acidic residues" evidence="3">
    <location>
        <begin position="212"/>
        <end position="225"/>
    </location>
</feature>
<feature type="compositionally biased region" description="Basic residues" evidence="3">
    <location>
        <begin position="230"/>
        <end position="258"/>
    </location>
</feature>
<feature type="compositionally biased region" description="Basic and acidic residues" evidence="3">
    <location>
        <begin position="259"/>
        <end position="270"/>
    </location>
</feature>
<feature type="compositionally biased region" description="Basic and acidic residues" evidence="3">
    <location>
        <begin position="277"/>
        <end position="286"/>
    </location>
</feature>
<feature type="modified residue" description="Phosphoserine" evidence="2">
    <location>
        <position position="7"/>
    </location>
</feature>
<feature type="modified residue" description="Phosphoserine" evidence="2">
    <location>
        <position position="9"/>
    </location>
</feature>
<feature type="modified residue" description="Phosphoserine" evidence="2">
    <location>
        <position position="62"/>
    </location>
</feature>
<feature type="modified residue" description="N6-acetyllysine" evidence="2">
    <location>
        <position position="110"/>
    </location>
</feature>
<feature type="modified residue" description="Phosphoserine" evidence="2">
    <location>
        <position position="147"/>
    </location>
</feature>
<feature type="modified residue" description="Phosphoserine" evidence="5">
    <location>
        <position position="155"/>
    </location>
</feature>
<feature type="modified residue" description="Phosphothreonine" evidence="5">
    <location>
        <position position="159"/>
    </location>
</feature>
<feature type="cross-link" description="Glycyl lysine isopeptide (Lys-Gly) (interchain with G-Cter in SUMO2)" evidence="2">
    <location>
        <position position="283"/>
    </location>
</feature>
<feature type="cross-link" description="Glycyl lysine isopeptide (Lys-Gly) (interchain with G-Cter in SUMO2)" evidence="2">
    <location>
        <position position="305"/>
    </location>
</feature>
<evidence type="ECO:0000250" key="1"/>
<evidence type="ECO:0000250" key="2">
    <source>
        <dbReference type="UniProtKB" id="Q8N5F7"/>
    </source>
</evidence>
<evidence type="ECO:0000256" key="3">
    <source>
        <dbReference type="SAM" id="MobiDB-lite"/>
    </source>
</evidence>
<evidence type="ECO:0000305" key="4"/>
<evidence type="ECO:0007744" key="5">
    <source>
    </source>
</evidence>
<keyword id="KW-0007">Acetylation</keyword>
<keyword id="KW-1017">Isopeptide bond</keyword>
<keyword id="KW-0914">Notch signaling pathway</keyword>
<keyword id="KW-0539">Nucleus</keyword>
<keyword id="KW-0597">Phosphoprotein</keyword>
<keyword id="KW-1185">Reference proteome</keyword>
<keyword id="KW-0678">Repressor</keyword>
<keyword id="KW-0804">Transcription</keyword>
<keyword id="KW-0805">Transcription regulation</keyword>
<keyword id="KW-0832">Ubl conjugation</keyword>
<reference key="1">
    <citation type="journal article" date="2004" name="Genome Res.">
        <title>The status, quality, and expansion of the NIH full-length cDNA project: the Mammalian Gene Collection (MGC).</title>
        <authorList>
            <consortium name="The MGC Project Team"/>
        </authorList>
    </citation>
    <scope>NUCLEOTIDE SEQUENCE [LARGE SCALE MRNA]</scope>
    <source>
        <tissue>Testis</tissue>
    </source>
</reference>
<reference key="2">
    <citation type="journal article" date="2012" name="Nat. Commun.">
        <title>Quantitative maps of protein phosphorylation sites across 14 different rat organs and tissues.</title>
        <authorList>
            <person name="Lundby A."/>
            <person name="Secher A."/>
            <person name="Lage K."/>
            <person name="Nordsborg N.B."/>
            <person name="Dmytriyev A."/>
            <person name="Lundby C."/>
            <person name="Olsen J.V."/>
        </authorList>
    </citation>
    <scope>PHOSPHORYLATION [LARGE SCALE ANALYSIS] AT SER-155 AND THR-159</scope>
    <scope>IDENTIFICATION BY MASS SPECTROMETRY [LARGE SCALE ANALYSIS]</scope>
</reference>